<evidence type="ECO:0000305" key="1"/>
<evidence type="ECO:0000312" key="2">
    <source>
        <dbReference type="WormBase" id="W09C5.6a"/>
    </source>
</evidence>
<dbReference type="EMBL" id="Z82077">
    <property type="protein sequence ID" value="CAB63331.1"/>
    <property type="molecule type" value="Genomic_DNA"/>
</dbReference>
<dbReference type="EMBL" id="Z82077">
    <property type="protein sequence ID" value="CAB63332.1"/>
    <property type="molecule type" value="Genomic_DNA"/>
</dbReference>
<dbReference type="RefSeq" id="NP_493392.1">
    <property type="nucleotide sequence ID" value="NM_060991.5"/>
</dbReference>
<dbReference type="PDB" id="9BH5">
    <property type="method" value="EM"/>
    <property type="resolution" value="2.63 A"/>
    <property type="chains" value="Cd=1-122"/>
</dbReference>
<dbReference type="PDB" id="9CAI">
    <property type="method" value="EM"/>
    <property type="resolution" value="2.59 A"/>
    <property type="chains" value="Cd=1-122"/>
</dbReference>
<dbReference type="PDBsum" id="9BH5"/>
<dbReference type="PDBsum" id="9CAI"/>
<dbReference type="EMDB" id="EMD-44533"/>
<dbReference type="EMDB" id="EMD-45392"/>
<dbReference type="SMR" id="Q9U332"/>
<dbReference type="BioGRID" id="38629">
    <property type="interactions" value="92"/>
</dbReference>
<dbReference type="FunCoup" id="Q9U332">
    <property type="interactions" value="1684"/>
</dbReference>
<dbReference type="IntAct" id="Q9U332">
    <property type="interactions" value="1"/>
</dbReference>
<dbReference type="STRING" id="6239.W09C5.6a.1"/>
<dbReference type="PaxDb" id="6239-W09C5.6a"/>
<dbReference type="PeptideAtlas" id="Q9U332"/>
<dbReference type="GeneID" id="173235"/>
<dbReference type="KEGG" id="cel:CELE_W09C5.6"/>
<dbReference type="AGR" id="WB:WBGene00004445"/>
<dbReference type="CTD" id="173235"/>
<dbReference type="WormBase" id="W09C5.6a">
    <property type="protein sequence ID" value="CE20168"/>
    <property type="gene ID" value="WBGene00004445"/>
    <property type="gene designation" value="rpl-31"/>
</dbReference>
<dbReference type="eggNOG" id="KOG0893">
    <property type="taxonomic scope" value="Eukaryota"/>
</dbReference>
<dbReference type="GeneTree" id="ENSGT00950000183030"/>
<dbReference type="HOGENOM" id="CLU_112570_1_1_1"/>
<dbReference type="InParanoid" id="Q9U332"/>
<dbReference type="OMA" id="EVWKQGI"/>
<dbReference type="OrthoDB" id="9739313at2759"/>
<dbReference type="PhylomeDB" id="Q9U332"/>
<dbReference type="Reactome" id="R-CEL-156827">
    <property type="pathway name" value="L13a-mediated translational silencing of Ceruloplasmin expression"/>
</dbReference>
<dbReference type="Reactome" id="R-CEL-1799339">
    <property type="pathway name" value="SRP-dependent cotranslational protein targeting to membrane"/>
</dbReference>
<dbReference type="Reactome" id="R-CEL-72689">
    <property type="pathway name" value="Formation of a pool of free 40S subunits"/>
</dbReference>
<dbReference type="Reactome" id="R-CEL-72706">
    <property type="pathway name" value="GTP hydrolysis and joining of the 60S ribosomal subunit"/>
</dbReference>
<dbReference type="Reactome" id="R-CEL-975956">
    <property type="pathway name" value="Nonsense Mediated Decay (NMD) independent of the Exon Junction Complex (EJC)"/>
</dbReference>
<dbReference type="Reactome" id="R-CEL-975957">
    <property type="pathway name" value="Nonsense Mediated Decay (NMD) enhanced by the Exon Junction Complex (EJC)"/>
</dbReference>
<dbReference type="PRO" id="PR:Q9U332"/>
<dbReference type="Proteomes" id="UP000001940">
    <property type="component" value="Chromosome I"/>
</dbReference>
<dbReference type="Bgee" id="WBGene00004445">
    <property type="expression patterns" value="Expressed in germ line (C elegans) and 4 other cell types or tissues"/>
</dbReference>
<dbReference type="GO" id="GO:0022625">
    <property type="term" value="C:cytosolic large ribosomal subunit"/>
    <property type="evidence" value="ECO:0000318"/>
    <property type="project" value="GO_Central"/>
</dbReference>
<dbReference type="GO" id="GO:0003735">
    <property type="term" value="F:structural constituent of ribosome"/>
    <property type="evidence" value="ECO:0000318"/>
    <property type="project" value="GO_Central"/>
</dbReference>
<dbReference type="GO" id="GO:0002181">
    <property type="term" value="P:cytoplasmic translation"/>
    <property type="evidence" value="ECO:0000318"/>
    <property type="project" value="GO_Central"/>
</dbReference>
<dbReference type="CDD" id="cd00463">
    <property type="entry name" value="Ribosomal_L31e"/>
    <property type="match status" value="1"/>
</dbReference>
<dbReference type="FunFam" id="3.10.440.10:FF:000001">
    <property type="entry name" value="60S ribosomal protein L31"/>
    <property type="match status" value="1"/>
</dbReference>
<dbReference type="Gene3D" id="3.10.440.10">
    <property type="match status" value="1"/>
</dbReference>
<dbReference type="InterPro" id="IPR000054">
    <property type="entry name" value="Ribosomal_eL31"/>
</dbReference>
<dbReference type="InterPro" id="IPR020052">
    <property type="entry name" value="Ribosomal_eL31_CS"/>
</dbReference>
<dbReference type="InterPro" id="IPR023621">
    <property type="entry name" value="Ribosomal_eL31_dom_sf"/>
</dbReference>
<dbReference type="PANTHER" id="PTHR10956">
    <property type="entry name" value="60S RIBOSOMAL PROTEIN L31"/>
    <property type="match status" value="1"/>
</dbReference>
<dbReference type="PANTHER" id="PTHR10956:SF0">
    <property type="entry name" value="60S RIBOSOMAL PROTEIN L31"/>
    <property type="match status" value="1"/>
</dbReference>
<dbReference type="Pfam" id="PF01198">
    <property type="entry name" value="Ribosomal_L31e"/>
    <property type="match status" value="1"/>
</dbReference>
<dbReference type="SMART" id="SM01380">
    <property type="entry name" value="Ribosomal_L31e"/>
    <property type="match status" value="1"/>
</dbReference>
<dbReference type="SUPFAM" id="SSF54575">
    <property type="entry name" value="Ribosomal protein L31e"/>
    <property type="match status" value="1"/>
</dbReference>
<dbReference type="PROSITE" id="PS01144">
    <property type="entry name" value="RIBOSOMAL_L31E"/>
    <property type="match status" value="1"/>
</dbReference>
<name>RL31_CAEEL</name>
<reference key="1">
    <citation type="journal article" date="1998" name="Science">
        <title>Genome sequence of the nematode C. elegans: a platform for investigating biology.</title>
        <authorList>
            <consortium name="The C. elegans sequencing consortium"/>
        </authorList>
    </citation>
    <scope>NUCLEOTIDE SEQUENCE [LARGE SCALE GENOMIC DNA]</scope>
    <scope>ALTERNATIVE SPLICING</scope>
    <source>
        <strain>Bristol N2</strain>
    </source>
</reference>
<comment type="similarity">
    <text evidence="1">Belongs to the eukaryotic ribosomal protein eL31 family.</text>
</comment>
<sequence>MAPKNEKKSRSTINEVVTREYTIHIHARIRGIGSKKRAPRAIDEIKKFAKIQMKTNDVRVDTKLNKFIWSKGIKNVPYRVRVRLSRRRNEDEDSAQKLYTLCTYVPCTNFHGLTNVNVDSEE</sequence>
<organism>
    <name type="scientific">Caenorhabditis elegans</name>
    <dbReference type="NCBI Taxonomy" id="6239"/>
    <lineage>
        <taxon>Eukaryota</taxon>
        <taxon>Metazoa</taxon>
        <taxon>Ecdysozoa</taxon>
        <taxon>Nematoda</taxon>
        <taxon>Chromadorea</taxon>
        <taxon>Rhabditida</taxon>
        <taxon>Rhabditina</taxon>
        <taxon>Rhabditomorpha</taxon>
        <taxon>Rhabditoidea</taxon>
        <taxon>Rhabditidae</taxon>
        <taxon>Peloderinae</taxon>
        <taxon>Caenorhabditis</taxon>
    </lineage>
</organism>
<protein>
    <recommendedName>
        <fullName evidence="1">Large ribosomal subunit protein eL31</fullName>
    </recommendedName>
    <alternativeName>
        <fullName>60S ribosomal protein L31</fullName>
    </alternativeName>
</protein>
<gene>
    <name evidence="2" type="primary">rpl-31</name>
    <name evidence="2" type="ORF">W09C5.6</name>
</gene>
<proteinExistence type="evidence at protein level"/>
<feature type="chain" id="PRO_0000153775" description="Large ribosomal subunit protein eL31">
    <location>
        <begin position="1"/>
        <end position="122"/>
    </location>
</feature>
<keyword id="KW-0002">3D-structure</keyword>
<keyword id="KW-1185">Reference proteome</keyword>
<keyword id="KW-0687">Ribonucleoprotein</keyword>
<keyword id="KW-0689">Ribosomal protein</keyword>
<accession>Q9U332</accession>
<accession>Q9U331</accession>